<organismHost>
    <name type="scientific">Trifolium</name>
    <dbReference type="NCBI Taxonomy" id="3898"/>
</organismHost>
<evidence type="ECO:0000250" key="1"/>
<evidence type="ECO:0000255" key="2"/>
<evidence type="ECO:0000305" key="3"/>
<comment type="function">
    <text evidence="1">Plays a role in viral cell-to-cell propagation, by facilitating genome transport to neighboring plant cells through plasmosdesmata. May induce the formation of granular vesicles derived from the Endoplasmic reticulum, which align on actin filaments (By similarity).</text>
</comment>
<comment type="subcellular location">
    <subcellularLocation>
        <location evidence="1">Host endoplasmic reticulum membrane</location>
    </subcellularLocation>
</comment>
<comment type="miscellaneous">
    <text>TGBp1, TGBp2 and TGBp3 seem to act together for cell-to-cell propagation. TGBp1 is the main movement protein that physically cross the plasmodesma with the viral genome. TGBp2 and TGBp3 would facilitate TGBp1 function.</text>
</comment>
<comment type="similarity">
    <text evidence="3">Belongs to the Tymovirales TGBp3 protein family.</text>
</comment>
<gene>
    <name type="ORF">ORF4</name>
</gene>
<sequence length="66" mass="7220">MDFTTLIIIGVYLLVFIVYFAKINTSVCTISISGASIEISGCDNPTLFEILPKLRPFNHGLSLPSN</sequence>
<organism>
    <name type="scientific">White clover mosaic virus (strain M)</name>
    <name type="common">WCMV</name>
    <dbReference type="NCBI Taxonomy" id="12189"/>
    <lineage>
        <taxon>Viruses</taxon>
        <taxon>Riboviria</taxon>
        <taxon>Orthornavirae</taxon>
        <taxon>Kitrinoviricota</taxon>
        <taxon>Alsuviricetes</taxon>
        <taxon>Tymovirales</taxon>
        <taxon>Alphaflexiviridae</taxon>
        <taxon>Potexvirus</taxon>
        <taxon>White clover mosaic virus</taxon>
    </lineage>
</organism>
<accession>P09501</accession>
<name>TGB3_WCMVM</name>
<reference key="1">
    <citation type="journal article" date="1988" name="Nucleic Acids Res.">
        <title>The complete nucleotide sequence of the potexvirus white clover mosaic virus.</title>
        <authorList>
            <person name="Forster R.L.S."/>
            <person name="Bevan M.W."/>
            <person name="Harbison S.-A."/>
            <person name="Gardner R.C."/>
        </authorList>
    </citation>
    <scope>NUCLEOTIDE SEQUENCE [GENOMIC RNA]</scope>
</reference>
<reference key="2">
    <citation type="journal article" date="1988" name="Virology">
        <title>Organization and interviral homologies of the coat protein gene of white clover mosaic virus.</title>
        <authorList>
            <person name="Harbison S.-A."/>
            <person name="Forster R.L.S."/>
            <person name="Guilford P.J."/>
            <person name="Gardner R.C."/>
        </authorList>
    </citation>
    <scope>NUCLEOTIDE SEQUENCE [GENOMIC RNA]</scope>
</reference>
<reference key="3">
    <citation type="journal article" date="2005" name="Mol. Plant Microbe Interact.">
        <title>A new cell-to-cell transport model for Potexviruses.</title>
        <authorList>
            <person name="Verchot-Lubicz J."/>
        </authorList>
    </citation>
    <scope>REVIEW</scope>
</reference>
<keyword id="KW-1038">Host endoplasmic reticulum</keyword>
<keyword id="KW-1043">Host membrane</keyword>
<keyword id="KW-0472">Membrane</keyword>
<keyword id="KW-1185">Reference proteome</keyword>
<keyword id="KW-0812">Transmembrane</keyword>
<keyword id="KW-1133">Transmembrane helix</keyword>
<keyword id="KW-0813">Transport</keyword>
<keyword id="KW-0916">Viral movement protein</keyword>
<protein>
    <recommendedName>
        <fullName>Movement protein TGBp3</fullName>
    </recommendedName>
    <alternativeName>
        <fullName>7 kDa protein</fullName>
    </alternativeName>
    <alternativeName>
        <fullName>Triple gene block 3 protein</fullName>
        <shortName>TGBp3</shortName>
    </alternativeName>
</protein>
<dbReference type="EMBL" id="X06728">
    <property type="protein sequence ID" value="CAA29907.1"/>
    <property type="molecule type" value="Genomic_RNA"/>
</dbReference>
<dbReference type="EMBL" id="M18920">
    <property type="protein sequence ID" value="AAA69637.1"/>
    <property type="molecule type" value="Genomic_RNA"/>
</dbReference>
<dbReference type="PIR" id="C34002">
    <property type="entry name" value="C34002"/>
</dbReference>
<dbReference type="RefSeq" id="NP_620718.1">
    <property type="nucleotide sequence ID" value="NC_003820.1"/>
</dbReference>
<dbReference type="KEGG" id="vg:944397"/>
<dbReference type="Proteomes" id="UP000007627">
    <property type="component" value="Segment"/>
</dbReference>
<dbReference type="GO" id="GO:0044167">
    <property type="term" value="C:host cell endoplasmic reticulum membrane"/>
    <property type="evidence" value="ECO:0007669"/>
    <property type="project" value="UniProtKB-SubCell"/>
</dbReference>
<dbReference type="GO" id="GO:0016020">
    <property type="term" value="C:membrane"/>
    <property type="evidence" value="ECO:0007669"/>
    <property type="project" value="UniProtKB-KW"/>
</dbReference>
<dbReference type="GO" id="GO:0046740">
    <property type="term" value="P:transport of virus in host, cell to cell"/>
    <property type="evidence" value="ECO:0007669"/>
    <property type="project" value="UniProtKB-KW"/>
</dbReference>
<dbReference type="InterPro" id="IPR003411">
    <property type="entry name" value="TGBp3"/>
</dbReference>
<dbReference type="Pfam" id="PF02495">
    <property type="entry name" value="TGBp3"/>
    <property type="match status" value="1"/>
</dbReference>
<feature type="chain" id="PRO_0000222610" description="Movement protein TGBp3">
    <location>
        <begin position="1"/>
        <end position="66"/>
    </location>
</feature>
<feature type="topological domain" description="Lumenal" evidence="2">
    <location>
        <begin position="1"/>
        <end position="2"/>
    </location>
</feature>
<feature type="transmembrane region" description="Helical" evidence="2">
    <location>
        <begin position="3"/>
        <end position="23"/>
    </location>
</feature>
<feature type="topological domain" description="Cytoplasmic" evidence="2">
    <location>
        <begin position="24"/>
        <end position="66"/>
    </location>
</feature>
<proteinExistence type="inferred from homology"/>